<sequence length="476" mass="51114">MMAKWMSVAQVKDKIKESSAEEVTAGYLEVIEKSKINGYITVSDKALEQAKKIDVEGHEGPLAGVPIAIKDNISVVGLPNSCGSKILEGYVPPFNAHVIEKLLDAGAVILGKTNLDEFAMGSSTETSYYGPTANPWDLERVPGGSSGGSAAVVAAGEAPFALGSDTGGSVRCPAAFCGVVGLKPTYGAVSRYGVVAYANSLEQVGPLANNVEDIAILMDVIAGYDRRDSTSIDSKTEYQKALVDDVKGLKIGVPKEFFGEGIHPGVEKAVWNAIHKFESLGATRQEVSMPNINYALASYYIIAMSEASSNLARFDGTRYGFRANGENWHAMVSKTRAEGFGTEVKRRILLGTYALSAGYHDKYYLKALKVRTLVKQDFDKALSTVDLLMAPTMPNPAFRIGEKIEDPLTLYLSDVNTCPINLAGVPSVSVPCGFTDGLPVGLQIMGKPFDEPTVLRAAYTFEKNTDYHTKRPPEVA</sequence>
<evidence type="ECO:0000255" key="1">
    <source>
        <dbReference type="HAMAP-Rule" id="MF_00120"/>
    </source>
</evidence>
<name>GATA_METAC</name>
<protein>
    <recommendedName>
        <fullName evidence="1">Glutamyl-tRNA(Gln) amidotransferase subunit A</fullName>
        <shortName evidence="1">Glu-ADT subunit A</shortName>
        <ecNumber evidence="1">6.3.5.7</ecNumber>
    </recommendedName>
</protein>
<dbReference type="EC" id="6.3.5.7" evidence="1"/>
<dbReference type="EMBL" id="AE010299">
    <property type="protein sequence ID" value="AAM07863.1"/>
    <property type="molecule type" value="Genomic_DNA"/>
</dbReference>
<dbReference type="SMR" id="Q8THJ1"/>
<dbReference type="FunCoup" id="Q8THJ1">
    <property type="interactions" value="123"/>
</dbReference>
<dbReference type="STRING" id="188937.MA_4523"/>
<dbReference type="EnsemblBacteria" id="AAM07863">
    <property type="protein sequence ID" value="AAM07863"/>
    <property type="gene ID" value="MA_4523"/>
</dbReference>
<dbReference type="KEGG" id="mac:MA_4523"/>
<dbReference type="HOGENOM" id="CLU_009600_0_3_2"/>
<dbReference type="InParanoid" id="Q8THJ1"/>
<dbReference type="PhylomeDB" id="Q8THJ1"/>
<dbReference type="Proteomes" id="UP000002487">
    <property type="component" value="Chromosome"/>
</dbReference>
<dbReference type="GO" id="GO:0030956">
    <property type="term" value="C:glutamyl-tRNA(Gln) amidotransferase complex"/>
    <property type="evidence" value="ECO:0007669"/>
    <property type="project" value="InterPro"/>
</dbReference>
<dbReference type="GO" id="GO:0005524">
    <property type="term" value="F:ATP binding"/>
    <property type="evidence" value="ECO:0007669"/>
    <property type="project" value="UniProtKB-KW"/>
</dbReference>
<dbReference type="GO" id="GO:0050567">
    <property type="term" value="F:glutaminyl-tRNA synthase (glutamine-hydrolyzing) activity"/>
    <property type="evidence" value="ECO:0007669"/>
    <property type="project" value="UniProtKB-UniRule"/>
</dbReference>
<dbReference type="GO" id="GO:0006412">
    <property type="term" value="P:translation"/>
    <property type="evidence" value="ECO:0007669"/>
    <property type="project" value="UniProtKB-UniRule"/>
</dbReference>
<dbReference type="Gene3D" id="3.90.1300.10">
    <property type="entry name" value="Amidase signature (AS) domain"/>
    <property type="match status" value="1"/>
</dbReference>
<dbReference type="HAMAP" id="MF_00120">
    <property type="entry name" value="GatA"/>
    <property type="match status" value="1"/>
</dbReference>
<dbReference type="InterPro" id="IPR000120">
    <property type="entry name" value="Amidase"/>
</dbReference>
<dbReference type="InterPro" id="IPR020556">
    <property type="entry name" value="Amidase_CS"/>
</dbReference>
<dbReference type="InterPro" id="IPR023631">
    <property type="entry name" value="Amidase_dom"/>
</dbReference>
<dbReference type="InterPro" id="IPR036928">
    <property type="entry name" value="AS_sf"/>
</dbReference>
<dbReference type="InterPro" id="IPR004412">
    <property type="entry name" value="GatA"/>
</dbReference>
<dbReference type="NCBIfam" id="TIGR00132">
    <property type="entry name" value="gatA"/>
    <property type="match status" value="1"/>
</dbReference>
<dbReference type="PANTHER" id="PTHR11895:SF7">
    <property type="entry name" value="GLUTAMYL-TRNA(GLN) AMIDOTRANSFERASE SUBUNIT A, MITOCHONDRIAL"/>
    <property type="match status" value="1"/>
</dbReference>
<dbReference type="PANTHER" id="PTHR11895">
    <property type="entry name" value="TRANSAMIDASE"/>
    <property type="match status" value="1"/>
</dbReference>
<dbReference type="Pfam" id="PF01425">
    <property type="entry name" value="Amidase"/>
    <property type="match status" value="1"/>
</dbReference>
<dbReference type="SUPFAM" id="SSF75304">
    <property type="entry name" value="Amidase signature (AS) enzymes"/>
    <property type="match status" value="1"/>
</dbReference>
<dbReference type="PROSITE" id="PS00571">
    <property type="entry name" value="AMIDASES"/>
    <property type="match status" value="1"/>
</dbReference>
<comment type="function">
    <text evidence="1">Allows the formation of correctly charged Gln-tRNA(Gln) through the transamidation of misacylated Glu-tRNA(Gln) in organisms which lack glutaminyl-tRNA synthetase. The reaction takes place in the presence of glutamine and ATP through an activated gamma-phospho-Glu-tRNA(Gln).</text>
</comment>
<comment type="catalytic activity">
    <reaction evidence="1">
        <text>L-glutamyl-tRNA(Gln) + L-glutamine + ATP + H2O = L-glutaminyl-tRNA(Gln) + L-glutamate + ADP + phosphate + H(+)</text>
        <dbReference type="Rhea" id="RHEA:17521"/>
        <dbReference type="Rhea" id="RHEA-COMP:9681"/>
        <dbReference type="Rhea" id="RHEA-COMP:9684"/>
        <dbReference type="ChEBI" id="CHEBI:15377"/>
        <dbReference type="ChEBI" id="CHEBI:15378"/>
        <dbReference type="ChEBI" id="CHEBI:29985"/>
        <dbReference type="ChEBI" id="CHEBI:30616"/>
        <dbReference type="ChEBI" id="CHEBI:43474"/>
        <dbReference type="ChEBI" id="CHEBI:58359"/>
        <dbReference type="ChEBI" id="CHEBI:78520"/>
        <dbReference type="ChEBI" id="CHEBI:78521"/>
        <dbReference type="ChEBI" id="CHEBI:456216"/>
        <dbReference type="EC" id="6.3.5.7"/>
    </reaction>
</comment>
<comment type="subunit">
    <text evidence="1">Heterotrimer of A, B and C subunits.</text>
</comment>
<comment type="similarity">
    <text evidence="1">Belongs to the amidase family. GatA subfamily.</text>
</comment>
<feature type="chain" id="PRO_0000105232" description="Glutamyl-tRNA(Gln) amidotransferase subunit A">
    <location>
        <begin position="1"/>
        <end position="476"/>
    </location>
</feature>
<feature type="active site" description="Charge relay system" evidence="1">
    <location>
        <position position="70"/>
    </location>
</feature>
<feature type="active site" description="Charge relay system" evidence="1">
    <location>
        <position position="145"/>
    </location>
</feature>
<feature type="active site" description="Acyl-ester intermediate" evidence="1">
    <location>
        <position position="169"/>
    </location>
</feature>
<gene>
    <name evidence="1" type="primary">gatA</name>
    <name type="ordered locus">MA_4523</name>
</gene>
<organism>
    <name type="scientific">Methanosarcina acetivorans (strain ATCC 35395 / DSM 2834 / JCM 12185 / C2A)</name>
    <dbReference type="NCBI Taxonomy" id="188937"/>
    <lineage>
        <taxon>Archaea</taxon>
        <taxon>Methanobacteriati</taxon>
        <taxon>Methanobacteriota</taxon>
        <taxon>Stenosarchaea group</taxon>
        <taxon>Methanomicrobia</taxon>
        <taxon>Methanosarcinales</taxon>
        <taxon>Methanosarcinaceae</taxon>
        <taxon>Methanosarcina</taxon>
    </lineage>
</organism>
<keyword id="KW-0067">ATP-binding</keyword>
<keyword id="KW-0436">Ligase</keyword>
<keyword id="KW-0547">Nucleotide-binding</keyword>
<keyword id="KW-0648">Protein biosynthesis</keyword>
<keyword id="KW-1185">Reference proteome</keyword>
<reference key="1">
    <citation type="journal article" date="2002" name="Genome Res.">
        <title>The genome of Methanosarcina acetivorans reveals extensive metabolic and physiological diversity.</title>
        <authorList>
            <person name="Galagan J.E."/>
            <person name="Nusbaum C."/>
            <person name="Roy A."/>
            <person name="Endrizzi M.G."/>
            <person name="Macdonald P."/>
            <person name="FitzHugh W."/>
            <person name="Calvo S."/>
            <person name="Engels R."/>
            <person name="Smirnov S."/>
            <person name="Atnoor D."/>
            <person name="Brown A."/>
            <person name="Allen N."/>
            <person name="Naylor J."/>
            <person name="Stange-Thomann N."/>
            <person name="DeArellano K."/>
            <person name="Johnson R."/>
            <person name="Linton L."/>
            <person name="McEwan P."/>
            <person name="McKernan K."/>
            <person name="Talamas J."/>
            <person name="Tirrell A."/>
            <person name="Ye W."/>
            <person name="Zimmer A."/>
            <person name="Barber R.D."/>
            <person name="Cann I."/>
            <person name="Graham D.E."/>
            <person name="Grahame D.A."/>
            <person name="Guss A.M."/>
            <person name="Hedderich R."/>
            <person name="Ingram-Smith C."/>
            <person name="Kuettner H.C."/>
            <person name="Krzycki J.A."/>
            <person name="Leigh J.A."/>
            <person name="Li W."/>
            <person name="Liu J."/>
            <person name="Mukhopadhyay B."/>
            <person name="Reeve J.N."/>
            <person name="Smith K."/>
            <person name="Springer T.A."/>
            <person name="Umayam L.A."/>
            <person name="White O."/>
            <person name="White R.H."/>
            <person name="de Macario E.C."/>
            <person name="Ferry J.G."/>
            <person name="Jarrell K.F."/>
            <person name="Jing H."/>
            <person name="Macario A.J.L."/>
            <person name="Paulsen I.T."/>
            <person name="Pritchett M."/>
            <person name="Sowers K.R."/>
            <person name="Swanson R.V."/>
            <person name="Zinder S.H."/>
            <person name="Lander E."/>
            <person name="Metcalf W.W."/>
            <person name="Birren B."/>
        </authorList>
    </citation>
    <scope>NUCLEOTIDE SEQUENCE [LARGE SCALE GENOMIC DNA]</scope>
    <source>
        <strain>ATCC 35395 / DSM 2834 / JCM 12185 / C2A</strain>
    </source>
</reference>
<accession>Q8THJ1</accession>
<proteinExistence type="inferred from homology"/>